<evidence type="ECO:0000250" key="1">
    <source>
        <dbReference type="UniProtKB" id="Q8NI60"/>
    </source>
</evidence>
<evidence type="ECO:0000255" key="2"/>
<evidence type="ECO:0000256" key="3">
    <source>
        <dbReference type="SAM" id="MobiDB-lite"/>
    </source>
</evidence>
<evidence type="ECO:0000269" key="4">
    <source>
    </source>
</evidence>
<evidence type="ECO:0000269" key="5">
    <source>
    </source>
</evidence>
<evidence type="ECO:0000269" key="6">
    <source>
    </source>
</evidence>
<evidence type="ECO:0000269" key="7">
    <source>
    </source>
</evidence>
<evidence type="ECO:0000269" key="8">
    <source>
    </source>
</evidence>
<evidence type="ECO:0000269" key="9">
    <source>
    </source>
</evidence>
<evidence type="ECO:0000269" key="10">
    <source>
    </source>
</evidence>
<evidence type="ECO:0000269" key="11">
    <source>
    </source>
</evidence>
<evidence type="ECO:0000269" key="12">
    <source>
    </source>
</evidence>
<evidence type="ECO:0000269" key="13">
    <source>
    </source>
</evidence>
<evidence type="ECO:0000269" key="14">
    <source>
    </source>
</evidence>
<evidence type="ECO:0000269" key="15">
    <source>
    </source>
</evidence>
<evidence type="ECO:0000305" key="16"/>
<evidence type="ECO:0000305" key="17">
    <source>
    </source>
</evidence>
<evidence type="ECO:0000305" key="18">
    <source>
    </source>
</evidence>
<keyword id="KW-0067">ATP-binding</keyword>
<keyword id="KW-0418">Kinase</keyword>
<keyword id="KW-0472">Membrane</keyword>
<keyword id="KW-0496">Mitochondrion</keyword>
<keyword id="KW-0999">Mitochondrion inner membrane</keyword>
<keyword id="KW-0547">Nucleotide-binding</keyword>
<keyword id="KW-1185">Reference proteome</keyword>
<keyword id="KW-0808">Transferase</keyword>
<keyword id="KW-0809">Transit peptide</keyword>
<keyword id="KW-0831">Ubiquinone biosynthesis</keyword>
<protein>
    <recommendedName>
        <fullName evidence="1">Atypical kinase COQ8, mitochondrial</fullName>
        <ecNumber evidence="1">2.7.-.-</ecNumber>
    </recommendedName>
    <alternativeName>
        <fullName>Activity of bc1 complex protein 1</fullName>
    </alternativeName>
    <alternativeName>
        <fullName>Coenzyme Q protein 8</fullName>
    </alternativeName>
    <alternativeName>
        <fullName>Ubiquinone biosynthesis protein COQ8</fullName>
    </alternativeName>
</protein>
<reference key="1">
    <citation type="journal article" date="1991" name="EMBO J.">
        <title>ABC1, a novel yeast nuclear gene has a dual function in mitochondria: it suppresses a cytochrome b mRNA translation defect and is essential for the electron transfer in the bc 1 complex.</title>
        <authorList>
            <person name="Bousquet I."/>
            <person name="Dujardin G."/>
            <person name="Slonimski P.P."/>
        </authorList>
    </citation>
    <scope>NUCLEOTIDE SEQUENCE [GENOMIC DNA]</scope>
    <scope>FUNCTION</scope>
    <source>
        <strain>S9-12/50</strain>
    </source>
</reference>
<reference key="2">
    <citation type="journal article" date="1997" name="Nature">
        <title>The nucleotide sequence of Saccharomyces cerevisiae chromosome VII.</title>
        <authorList>
            <person name="Tettelin H."/>
            <person name="Agostoni-Carbone M.L."/>
            <person name="Albermann K."/>
            <person name="Albers M."/>
            <person name="Arroyo J."/>
            <person name="Backes U."/>
            <person name="Barreiros T."/>
            <person name="Bertani I."/>
            <person name="Bjourson A.J."/>
            <person name="Brueckner M."/>
            <person name="Bruschi C.V."/>
            <person name="Carignani G."/>
            <person name="Castagnoli L."/>
            <person name="Cerdan E."/>
            <person name="Clemente M.L."/>
            <person name="Coblenz A."/>
            <person name="Coglievina M."/>
            <person name="Coissac E."/>
            <person name="Defoor E."/>
            <person name="Del Bino S."/>
            <person name="Delius H."/>
            <person name="Delneri D."/>
            <person name="de Wergifosse P."/>
            <person name="Dujon B."/>
            <person name="Durand P."/>
            <person name="Entian K.-D."/>
            <person name="Eraso P."/>
            <person name="Escribano V."/>
            <person name="Fabiani L."/>
            <person name="Fartmann B."/>
            <person name="Feroli F."/>
            <person name="Feuermann M."/>
            <person name="Frontali L."/>
            <person name="Garcia-Gonzalez M."/>
            <person name="Garcia-Saez M.I."/>
            <person name="Goffeau A."/>
            <person name="Guerreiro P."/>
            <person name="Hani J."/>
            <person name="Hansen M."/>
            <person name="Hebling U."/>
            <person name="Hernandez K."/>
            <person name="Heumann K."/>
            <person name="Hilger F."/>
            <person name="Hofmann B."/>
            <person name="Indge K.J."/>
            <person name="James C.M."/>
            <person name="Klima R."/>
            <person name="Koetter P."/>
            <person name="Kramer B."/>
            <person name="Kramer W."/>
            <person name="Lauquin G."/>
            <person name="Leuther H."/>
            <person name="Louis E.J."/>
            <person name="Maillier E."/>
            <person name="Marconi A."/>
            <person name="Martegani E."/>
            <person name="Mazon M.J."/>
            <person name="Mazzoni C."/>
            <person name="McReynolds A.D.K."/>
            <person name="Melchioretto P."/>
            <person name="Mewes H.-W."/>
            <person name="Minenkova O."/>
            <person name="Mueller-Auer S."/>
            <person name="Nawrocki A."/>
            <person name="Netter P."/>
            <person name="Neu R."/>
            <person name="Nombela C."/>
            <person name="Oliver S.G."/>
            <person name="Panzeri L."/>
            <person name="Paoluzi S."/>
            <person name="Plevani P."/>
            <person name="Portetelle D."/>
            <person name="Portillo F."/>
            <person name="Potier S."/>
            <person name="Purnelle B."/>
            <person name="Rieger M."/>
            <person name="Riles L."/>
            <person name="Rinaldi T."/>
            <person name="Robben J."/>
            <person name="Rodrigues-Pousada C."/>
            <person name="Rodriguez-Belmonte E."/>
            <person name="Rodriguez-Torres A.M."/>
            <person name="Rose M."/>
            <person name="Ruzzi M."/>
            <person name="Saliola M."/>
            <person name="Sanchez-Perez M."/>
            <person name="Schaefer B."/>
            <person name="Schaefer M."/>
            <person name="Scharfe M."/>
            <person name="Schmidheini T."/>
            <person name="Schreer A."/>
            <person name="Skala J."/>
            <person name="Souciet J.-L."/>
            <person name="Steensma H.Y."/>
            <person name="Talla E."/>
            <person name="Thierry A."/>
            <person name="Vandenbol M."/>
            <person name="van der Aart Q.J.M."/>
            <person name="Van Dyck L."/>
            <person name="Vanoni M."/>
            <person name="Verhasselt P."/>
            <person name="Voet M."/>
            <person name="Volckaert G."/>
            <person name="Wambutt R."/>
            <person name="Watson M.D."/>
            <person name="Weber N."/>
            <person name="Wedler E."/>
            <person name="Wedler H."/>
            <person name="Wipfli P."/>
            <person name="Wolf K."/>
            <person name="Wright L.F."/>
            <person name="Zaccaria P."/>
            <person name="Zimmermann M."/>
            <person name="Zollner A."/>
            <person name="Kleine K."/>
        </authorList>
    </citation>
    <scope>NUCLEOTIDE SEQUENCE [LARGE SCALE GENOMIC DNA]</scope>
    <source>
        <strain>ATCC 204508 / S288c</strain>
    </source>
</reference>
<reference key="3">
    <citation type="journal article" date="2014" name="G3 (Bethesda)">
        <title>The reference genome sequence of Saccharomyces cerevisiae: Then and now.</title>
        <authorList>
            <person name="Engel S.R."/>
            <person name="Dietrich F.S."/>
            <person name="Fisk D.G."/>
            <person name="Binkley G."/>
            <person name="Balakrishnan R."/>
            <person name="Costanzo M.C."/>
            <person name="Dwight S.S."/>
            <person name="Hitz B.C."/>
            <person name="Karra K."/>
            <person name="Nash R.S."/>
            <person name="Weng S."/>
            <person name="Wong E.D."/>
            <person name="Lloyd P."/>
            <person name="Skrzypek M.S."/>
            <person name="Miyasato S.R."/>
            <person name="Simison M."/>
            <person name="Cherry J.M."/>
        </authorList>
    </citation>
    <scope>GENOME REANNOTATION</scope>
    <source>
        <strain>ATCC 204508 / S288c</strain>
    </source>
</reference>
<reference key="4">
    <citation type="journal article" date="1997" name="Eur. J. Biochem.">
        <title>The nuclear ABC1 gene is essential for the correct conformation and functioning of the cytochrome bc1 complex and the neighbouring complexes II and IV in the mitochondrial respiratory chain.</title>
        <authorList>
            <person name="Brasseur G."/>
            <person name="Tron G."/>
            <person name="Dujardin G."/>
            <person name="Slonimski P.P."/>
            <person name="Brivet-Chevillotte P."/>
        </authorList>
    </citation>
    <scope>FUNCTION</scope>
</reference>
<reference key="5">
    <citation type="journal article" date="1997" name="Mol. Aspects Med.">
        <title>Sensitivity to treatment with polyunsaturated fatty acids is a general characteristic of the ubiquinone-deficient yeast coq mutants.</title>
        <authorList>
            <person name="Poon W.W."/>
            <person name="Do T.Q."/>
            <person name="Marbois B.N."/>
            <person name="Clarke C.F."/>
        </authorList>
    </citation>
    <scope>FUNCTION</scope>
</reference>
<reference key="6">
    <citation type="journal article" date="2000" name="Biochim. Biophys. Acta">
        <title>Genetic evidence for a multi-subunit complex in the O-methyltransferase steps of coenzyme Q biosynthesis.</title>
        <authorList>
            <person name="Hsu A.Y."/>
            <person name="Do T.Q."/>
            <person name="Lee P.T."/>
            <person name="Clarke C.F."/>
        </authorList>
    </citation>
    <scope>DISRUPTION PHENOTYPE</scope>
</reference>
<reference key="7">
    <citation type="journal article" date="2001" name="J. Biol. Chem.">
        <title>A defect in coenzyme Q biosynthesis is responsible for the respiratory deficiency in Saccharomyces cerevisiae abc1 mutants.</title>
        <authorList>
            <person name="Do T.Q."/>
            <person name="Hsu A.Y."/>
            <person name="Jonassen T."/>
            <person name="Lee P.T."/>
            <person name="Clarke C.F."/>
        </authorList>
    </citation>
    <scope>FUNCTION</scope>
    <scope>SUBCELLULAR LOCATION</scope>
</reference>
<reference key="8">
    <citation type="journal article" date="2003" name="Nature">
        <title>Global analysis of protein expression in yeast.</title>
        <authorList>
            <person name="Ghaemmaghami S."/>
            <person name="Huh W.-K."/>
            <person name="Bower K."/>
            <person name="Howson R.W."/>
            <person name="Belle A."/>
            <person name="Dephoure N."/>
            <person name="O'Shea E.K."/>
            <person name="Weissman J.S."/>
        </authorList>
    </citation>
    <scope>LEVEL OF PROTEIN EXPRESSION [LARGE SCALE ANALYSIS]</scope>
</reference>
<reference key="9">
    <citation type="journal article" date="2004" name="Biochem. Biophys. Res. Commun.">
        <title>A tRNA(TRP) gene mediates the suppression of cbs2-223 previously attributed to ABC1/COQ8.</title>
        <authorList>
            <person name="Hsieh E.J."/>
            <person name="Dinoso J.B."/>
            <person name="Clarke C.F."/>
        </authorList>
    </citation>
    <scope>FUNCTION</scope>
</reference>
<reference key="10">
    <citation type="journal article" date="2008" name="FEMS Yeast Res.">
        <title>Ubiquinone biosynthesis in Saccharomyces cerevisiae: the molecular organization of O-methylase Coq3p depends on Abc1p/Coq8p.</title>
        <authorList>
            <person name="Tauche A."/>
            <person name="Krause-Buchholz U."/>
            <person name="Rodel G."/>
        </authorList>
    </citation>
    <scope>FUNCTION</scope>
    <scope>SUBUNIT</scope>
    <scope>SUBCELLULAR LOCATION</scope>
</reference>
<reference key="11">
    <citation type="journal article" date="2009" name="Cell. Mol. Life Sci.">
        <title>Hydroxylation of demethoxy-Q6 constitutes a control point in yeast coenzyme Q6 biosynthesis.</title>
        <authorList>
            <person name="Padilla S."/>
            <person name="Tran U.C."/>
            <person name="Jimenez-Hidalgo M."/>
            <person name="Lopez-Martin J.M."/>
            <person name="Martin-Montalvo A."/>
            <person name="Clarke C.F."/>
            <person name="Navas P."/>
            <person name="Santos-Ocana C."/>
        </authorList>
    </citation>
    <scope>FUNCTION</scope>
</reference>
<reference key="12">
    <citation type="journal article" date="2011" name="Biochim. Biophys. Acta">
        <title>Expression of the human atypical kinase ADCK3 rescues coenzyme Q biosynthesis and phosphorylation of Coq polypeptides in yeast coq8 mutants.</title>
        <authorList>
            <person name="Xie L.X."/>
            <person name="Hsieh E.J."/>
            <person name="Watanabe S."/>
            <person name="Allan C.M."/>
            <person name="Chen J.Y."/>
            <person name="Tran U.C."/>
            <person name="Clarke C.F."/>
        </authorList>
    </citation>
    <scope>SUBCELLULAR LOCATION</scope>
    <scope>FUNCTION</scope>
    <scope>MUTAGENESIS OF GLY-89; GLY-130; ALA-197; LYS-216; ASP-229; ASP-346; ASN-348 AND GLY-475</scope>
</reference>
<reference key="13">
    <citation type="journal article" date="2015" name="Mol. Cell">
        <title>Mitochondrial ADCK3 employs an atypical protein kinase-like fold to enable coenzyme Q biosynthesis.</title>
        <authorList>
            <person name="Stefely J.A."/>
            <person name="Reidenbach A.G."/>
            <person name="Ulbrich A."/>
            <person name="Oruganty K."/>
            <person name="Floyd B.J."/>
            <person name="Jochem A."/>
            <person name="Saunders J.M."/>
            <person name="Johnson I.E."/>
            <person name="Minogue C.E."/>
            <person name="Wrobel R.L."/>
            <person name="Barber G.E."/>
            <person name="Lee D."/>
            <person name="Li S."/>
            <person name="Kannan N."/>
            <person name="Coon J.J."/>
            <person name="Bingman C.A."/>
            <person name="Pagliarini D.J."/>
        </authorList>
    </citation>
    <scope>FUNCTION</scope>
    <scope>PATHWAY</scope>
    <scope>MUTAGENESIS OF LYS-134; GLN-137; ALA-197; SER-198; LYS-216; GLU-269; ASP-346; ASN-351; ASP-365 AND ARG-471</scope>
</reference>
<reference key="14">
    <citation type="journal article" date="2016" name="Mol. Cell">
        <title>Cerebellar ataxia and coenzyme Q deficiency through loss of unorthodox kinase activity.</title>
        <authorList>
            <person name="Stefely J.A."/>
            <person name="Licitra F."/>
            <person name="Laredj L."/>
            <person name="Reidenbach A.G."/>
            <person name="Kemmerer Z.A."/>
            <person name="Grangeray A."/>
            <person name="Jaeg-Ehret T."/>
            <person name="Minogue C.E."/>
            <person name="Ulbrich A."/>
            <person name="Hutchins P.D."/>
            <person name="Wilkerson E.M."/>
            <person name="Ruan Z."/>
            <person name="Aydin D."/>
            <person name="Hebert A.S."/>
            <person name="Guo X."/>
            <person name="Freiberger E.C."/>
            <person name="Reutenauer L."/>
            <person name="Jochem A."/>
            <person name="Chergova M."/>
            <person name="Johnson I.E."/>
            <person name="Lohman D.C."/>
            <person name="Rush M.J."/>
            <person name="Kwiecien N.W."/>
            <person name="Singh P.K."/>
            <person name="Schlagowski A.I."/>
            <person name="Floyd B.J."/>
            <person name="Forsman U."/>
            <person name="Sindelar P.J."/>
            <person name="Westphall M.S."/>
            <person name="Pierrel F."/>
            <person name="Zoll J."/>
            <person name="Dal Peraro M."/>
            <person name="Kannan N."/>
            <person name="Bingman C.A."/>
            <person name="Coon J.J."/>
            <person name="Isope P."/>
            <person name="Puccio H."/>
            <person name="Pagliarini D.J."/>
        </authorList>
    </citation>
    <scope>FUNCTION</scope>
    <scope>MUTAGENESIS OF LYS-134; ALA-197 AND ASP-365</scope>
</reference>
<feature type="transit peptide" description="Mitochondrion" evidence="2">
    <location>
        <begin position="1"/>
        <end position="29"/>
    </location>
</feature>
<feature type="chain" id="PRO_0000000260" description="Atypical kinase COQ8, mitochondrial">
    <location>
        <begin position="30"/>
        <end position="501"/>
    </location>
</feature>
<feature type="domain" description="Protein kinase">
    <location>
        <begin position="188"/>
        <end position="501"/>
    </location>
</feature>
<feature type="region of interest" description="Disordered" evidence="3">
    <location>
        <begin position="41"/>
        <end position="69"/>
    </location>
</feature>
<feature type="short sequence motif" description="KxGQ motif" evidence="1">
    <location>
        <begin position="134"/>
        <end position="137"/>
    </location>
</feature>
<feature type="short sequence motif" description="AAAS motif" evidence="1">
    <location>
        <begin position="195"/>
        <end position="198"/>
    </location>
</feature>
<feature type="compositionally biased region" description="Basic and acidic residues" evidence="3">
    <location>
        <begin position="45"/>
        <end position="65"/>
    </location>
</feature>
<feature type="active site" description="Proton acceptor" evidence="1">
    <location>
        <position position="346"/>
    </location>
</feature>
<feature type="binding site" evidence="1">
    <location>
        <position position="198"/>
    </location>
    <ligand>
        <name>ATP</name>
        <dbReference type="ChEBI" id="CHEBI:30616"/>
    </ligand>
</feature>
<feature type="binding site" evidence="1">
    <location>
        <position position="216"/>
    </location>
    <ligand>
        <name>ATP</name>
        <dbReference type="ChEBI" id="CHEBI:30616"/>
    </ligand>
</feature>
<feature type="binding site" evidence="1">
    <location>
        <begin position="303"/>
        <end position="306"/>
    </location>
    <ligand>
        <name>ATP</name>
        <dbReference type="ChEBI" id="CHEBI:30616"/>
    </ligand>
</feature>
<feature type="binding site" evidence="1">
    <location>
        <position position="351"/>
    </location>
    <ligand>
        <name>ATP</name>
        <dbReference type="ChEBI" id="CHEBI:30616"/>
    </ligand>
</feature>
<feature type="binding site" evidence="1">
    <location>
        <position position="365"/>
    </location>
    <ligand>
        <name>ATP</name>
        <dbReference type="ChEBI" id="CHEBI:30616"/>
    </ligand>
</feature>
<feature type="mutagenesis site" description="In coq8-2; impairs growth on ethanol and/or glycerol as a carbon source, but retains steady-state levels of COQ8." evidence="11">
    <original>G</original>
    <variation>D</variation>
    <location>
        <position position="89"/>
    </location>
</feature>
<feature type="mutagenesis site" description="In coq8-5; impairs growth on ethanol and/or glycerol as a carbon source, but retains steady-state levels of COQ8. Impairs coenzyme Q6 biosynthesis." evidence="11">
    <original>G</original>
    <variation>D</variation>
    <location>
        <position position="130"/>
    </location>
</feature>
<feature type="mutagenesis site" description="Abolishes coenzyme Q biosynthesis. Able to autophosphorylate in cis." evidence="12 13">
    <original>K</original>
    <variation>A</variation>
    <variation>H</variation>
    <variation>R</variation>
    <variation>S</variation>
    <location>
        <position position="134"/>
    </location>
</feature>
<feature type="mutagenesis site" description="Abolishes coenzyme Q biosynthesis." evidence="12">
    <original>Q</original>
    <variation>E</variation>
    <location>
        <position position="137"/>
    </location>
</feature>
<feature type="mutagenesis site" description="Abolishes coenzyme Q biosynthesis. Able to autophosphorylate in cis." evidence="12 13">
    <original>A</original>
    <variation>G</variation>
    <variation>S</variation>
    <location>
        <position position="197"/>
    </location>
</feature>
<feature type="mutagenesis site" description="In coq8-3; impairs growth on ethanol and/or glycerol as a carbon source, but retains steady-state levels of COQ8. Impairs coenzyme Q6 biosynthesis." evidence="11">
    <original>A</original>
    <variation>V</variation>
    <location>
        <position position="197"/>
    </location>
</feature>
<feature type="mutagenesis site" description="Decreased coenzyme Q biosynthesis." evidence="12">
    <original>S</original>
    <variation>A</variation>
    <location>
        <position position="198"/>
    </location>
</feature>
<feature type="mutagenesis site" description="Impairs coenzyme Q biosynthesis." evidence="11">
    <original>K</original>
    <variation>A</variation>
    <location>
        <position position="216"/>
    </location>
</feature>
<feature type="mutagenesis site" description="Abolishes coenzyme Q biosynthesis." evidence="12">
    <original>K</original>
    <variation>R</variation>
    <location>
        <position position="216"/>
    </location>
</feature>
<feature type="mutagenesis site" description="In coq8-6; impairs growth on ethanol and/or glycerol as a carbon source, but retains steady-state levels of COQ8." evidence="11">
    <original>D</original>
    <variation>N</variation>
    <location>
        <position position="229"/>
    </location>
</feature>
<feature type="mutagenesis site" description="Abolishes coenzyme Q biosynthesis." evidence="12">
    <original>E</original>
    <variation>Q</variation>
    <location>
        <position position="269"/>
    </location>
</feature>
<feature type="mutagenesis site" description="In coq8-2; impairs growth on ethanol and/or glycerol as a carbon source, but retains steady-state levels of COQ8. Abolishes coenzyme Q biosynthesis." evidence="11 12">
    <original>D</original>
    <variation>N</variation>
    <location>
        <position position="346"/>
    </location>
</feature>
<feature type="mutagenesis site" description="In coq8-4; impairs growth on ethanol and/or glycerol as a carbon source, but retains steady-state levels of COQ8." evidence="11">
    <original>N</original>
    <variation>Y</variation>
    <location>
        <position position="348"/>
    </location>
</feature>
<feature type="mutagenesis site" description="Abolishes coenzyme Q biosynthesis." evidence="12">
    <original>N</original>
    <variation>A</variation>
    <location>
        <position position="351"/>
    </location>
</feature>
<feature type="mutagenesis site" description="Abolishes coenzyme Q biosynthesis. Enhanced autophosphorylation in cis." evidence="12 13">
    <original>D</original>
    <variation>N</variation>
    <location>
        <position position="365"/>
    </location>
</feature>
<feature type="mutagenesis site" description="Abolishes coenzyme Q biosynthesis." evidence="12">
    <original>R</original>
    <variation>E</variation>
    <location>
        <position position="471"/>
    </location>
</feature>
<feature type="mutagenesis site" description="In coq8-8; impairs growth on ethanol and/or glycerol as a carbon source, but retains steady-state levels of COQ8." evidence="11">
    <original>G</original>
    <variation>N</variation>
    <location>
        <position position="475"/>
    </location>
</feature>
<organism>
    <name type="scientific">Saccharomyces cerevisiae (strain ATCC 204508 / S288c)</name>
    <name type="common">Baker's yeast</name>
    <dbReference type="NCBI Taxonomy" id="559292"/>
    <lineage>
        <taxon>Eukaryota</taxon>
        <taxon>Fungi</taxon>
        <taxon>Dikarya</taxon>
        <taxon>Ascomycota</taxon>
        <taxon>Saccharomycotina</taxon>
        <taxon>Saccharomycetes</taxon>
        <taxon>Saccharomycetales</taxon>
        <taxon>Saccharomycetaceae</taxon>
        <taxon>Saccharomyces</taxon>
    </lineage>
</organism>
<comment type="function">
    <text evidence="1 5 7 8 9 10 11 12 13 14 15">Atypical kinase involved in the biosynthesis of coenzyme Q, also named ubiquinone, an essential lipid-soluble electron transporter for aerobic cellular respiration (PubMed:27499294). Its substrate specificity is still unclear: may act as a protein kinase that mediates phosphorylation of COQ3, COQ5 and/or COQ7 (PubMed:11279158, PubMed:15063807, PubMed:1648478, PubMed:18801050, PubMed:19002377, PubMed:21296186, PubMed:25498144, PubMed:9210471, PubMed:9266513). According to other reports, acts as a small molecule kinase, possibly a lipid kinase that phosphorylates a prenyl lipid in the ubiquinone biosynthesis pathway, as suggested by its ability to bind coenzyme Q lipid intermediates (By similarity).</text>
</comment>
<comment type="pathway">
    <text evidence="12">Cofactor biosynthesis; ubiquinone biosynthesis.</text>
</comment>
<comment type="subunit">
    <text evidence="9">Forms homopolymers. Predominantly associated with a complex of about 500 kDa.</text>
</comment>
<comment type="subcellular location">
    <subcellularLocation>
        <location evidence="5 9 11">Mitochondrion inner membrane</location>
        <topology evidence="5 9 11">Peripheral membrane protein</topology>
        <orientation evidence="5 9 11">Matrix side</orientation>
    </subcellularLocation>
</comment>
<comment type="domain">
    <text evidence="1">Adopts an atypical protein kinase-like fold: while it adopts a core fold similar to that of well-characterized protein kinase-like domains. The KxGQ motif completely occludes the typical substrate binding pocket. Nucleotide-binding opens the substrate binding pocket and flips the active site from inside the hydrophobic core into a catalytically competent, solvent-exposed posture.</text>
</comment>
<comment type="disruption phenotype">
    <text evidence="4">Decreases COQ3 O-methyltransferase activity.</text>
</comment>
<comment type="miscellaneous">
    <text evidence="6">Present with 952 molecules/cell in log phase SD medium.</text>
</comment>
<comment type="similarity">
    <text evidence="16">Belongs to the protein kinase superfamily. ADCK protein kinase family.</text>
</comment>
<comment type="caution">
    <text evidence="13">Able to autophosphorylate in cis in vitro. This activity may not be relevant in vivo and only reflects in vitro conditions. Probably does not act as a protein kinase as it is unable to act in trans (PubMed:27499294).</text>
</comment>
<comment type="caution">
    <text evidence="17 18">Was originally (PubMed:1648478) isolated as a multicopy suppressor of a yeast strain harboring a mutation in a cytochrome b translational activator (cbs2-223). But more recently it has been shown (PubMed:15063807) that a tRNA(Trp) gene located downstream of COQ8 mediates suppression of the cbs2-223 mutation. The inability of COQ8 to suppress the cbs2-223 allele in multicopy indicates it may not be a chaperone as previously reported.</text>
</comment>
<proteinExistence type="evidence at protein level"/>
<sequence length="501" mass="56742">MVTNMVKLRNLRRLYCSSRLLRTIQNGRISSVSSISLSKKYTTKSAKEGEENVERKHEEEKKDTLKSSSVPTSRISRLFHYGSLAAGVGMNAAAKGISEVAKGNSPTWKSLILSDSNIDRITNKFSKMRGVALKIGQLLSFQDEKVLPKELYEILSRVQNSANHMPQRQLEKVMAKELGANWKTKFSKFDKIPMAAASIGQVHAAELPSGQRVVVKIQYPGVKESIDSDLNSLLMLLTASSLLPKGLFLDKTIANARTELKWECDYNREARALQKFEALLKDDPAFEVPHVFPEYTTDNIITMTRMEGTEIMKLPKASQETKNFISENIMRLCLEEIATFKYMQTDPNWANFLYNGRTKKIELLDFGASRPFAEDFILKYRKLLTYATLRDRKGAYEMSVQLGYLTGLESQSMKDAHVDSVLTLGEPFRGDVDKSFDFKDQTVSDRIRGNIGLMLNERLCPPPEETYSLHRKFSGIFLLCARMGASVHCAKLFKEIFAYKV</sequence>
<dbReference type="EC" id="2.7.-.-" evidence="1"/>
<dbReference type="EMBL" id="X59027">
    <property type="protein sequence ID" value="CAA41759.1"/>
    <property type="molecule type" value="Genomic_DNA"/>
</dbReference>
<dbReference type="EMBL" id="Z72641">
    <property type="protein sequence ID" value="CAA96827.1"/>
    <property type="molecule type" value="Genomic_DNA"/>
</dbReference>
<dbReference type="EMBL" id="BK006941">
    <property type="protein sequence ID" value="DAA07990.1"/>
    <property type="molecule type" value="Genomic_DNA"/>
</dbReference>
<dbReference type="PIR" id="S16711">
    <property type="entry name" value="S16711"/>
</dbReference>
<dbReference type="RefSeq" id="NP_011396.1">
    <property type="nucleotide sequence ID" value="NM_001180984.1"/>
</dbReference>
<dbReference type="SMR" id="P27697"/>
<dbReference type="BioGRID" id="33132">
    <property type="interactions" value="132"/>
</dbReference>
<dbReference type="DIP" id="DIP-5113N"/>
<dbReference type="FunCoup" id="P27697">
    <property type="interactions" value="471"/>
</dbReference>
<dbReference type="IntAct" id="P27697">
    <property type="interactions" value="4"/>
</dbReference>
<dbReference type="MINT" id="P27697"/>
<dbReference type="STRING" id="4932.YGL119W"/>
<dbReference type="iPTMnet" id="P27697"/>
<dbReference type="PaxDb" id="4932-YGL119W"/>
<dbReference type="PeptideAtlas" id="P27697"/>
<dbReference type="DNASU" id="852758"/>
<dbReference type="EnsemblFungi" id="YGL119W_mRNA">
    <property type="protein sequence ID" value="YGL119W"/>
    <property type="gene ID" value="YGL119W"/>
</dbReference>
<dbReference type="GeneID" id="852758"/>
<dbReference type="KEGG" id="sce:YGL119W"/>
<dbReference type="AGR" id="SGD:S000003087"/>
<dbReference type="SGD" id="S000003087">
    <property type="gene designation" value="COQ8"/>
</dbReference>
<dbReference type="VEuPathDB" id="FungiDB:YGL119W"/>
<dbReference type="eggNOG" id="KOG1234">
    <property type="taxonomic scope" value="Eukaryota"/>
</dbReference>
<dbReference type="GeneTree" id="ENSGT00940000169293"/>
<dbReference type="HOGENOM" id="CLU_006533_9_0_1"/>
<dbReference type="InParanoid" id="P27697"/>
<dbReference type="OMA" id="PEYYVPR"/>
<dbReference type="OrthoDB" id="201153at2759"/>
<dbReference type="BioCyc" id="YEAST:G3O-30616-MONOMER"/>
<dbReference type="Reactome" id="R-SCE-2142789">
    <property type="pathway name" value="Ubiquinol biosynthesis"/>
</dbReference>
<dbReference type="UniPathway" id="UPA00232"/>
<dbReference type="BioGRID-ORCS" id="852758">
    <property type="hits" value="1 hit in 13 CRISPR screens"/>
</dbReference>
<dbReference type="PRO" id="PR:P27697"/>
<dbReference type="Proteomes" id="UP000002311">
    <property type="component" value="Chromosome VII"/>
</dbReference>
<dbReference type="RNAct" id="P27697">
    <property type="molecule type" value="protein"/>
</dbReference>
<dbReference type="GO" id="GO:0005743">
    <property type="term" value="C:mitochondrial inner membrane"/>
    <property type="evidence" value="ECO:0007669"/>
    <property type="project" value="UniProtKB-SubCell"/>
</dbReference>
<dbReference type="GO" id="GO:0005759">
    <property type="term" value="C:mitochondrial matrix"/>
    <property type="evidence" value="ECO:0000314"/>
    <property type="project" value="SGD"/>
</dbReference>
<dbReference type="GO" id="GO:0005739">
    <property type="term" value="C:mitochondrion"/>
    <property type="evidence" value="ECO:0000314"/>
    <property type="project" value="SGD"/>
</dbReference>
<dbReference type="GO" id="GO:0005524">
    <property type="term" value="F:ATP binding"/>
    <property type="evidence" value="ECO:0007669"/>
    <property type="project" value="UniProtKB-KW"/>
</dbReference>
<dbReference type="GO" id="GO:0016887">
    <property type="term" value="F:ATP hydrolysis activity"/>
    <property type="evidence" value="ECO:0000314"/>
    <property type="project" value="SGD"/>
</dbReference>
<dbReference type="GO" id="GO:0016301">
    <property type="term" value="F:kinase activity"/>
    <property type="evidence" value="ECO:0000314"/>
    <property type="project" value="UniProtKB"/>
</dbReference>
<dbReference type="GO" id="GO:0008289">
    <property type="term" value="F:lipid binding"/>
    <property type="evidence" value="ECO:0000314"/>
    <property type="project" value="SGD"/>
</dbReference>
<dbReference type="GO" id="GO:0004672">
    <property type="term" value="F:protein kinase activity"/>
    <property type="evidence" value="ECO:0000314"/>
    <property type="project" value="UniProtKB"/>
</dbReference>
<dbReference type="GO" id="GO:0016310">
    <property type="term" value="P:phosphorylation"/>
    <property type="evidence" value="ECO:0000314"/>
    <property type="project" value="UniProtKB"/>
</dbReference>
<dbReference type="GO" id="GO:0006744">
    <property type="term" value="P:ubiquinone biosynthetic process"/>
    <property type="evidence" value="ECO:0000314"/>
    <property type="project" value="UniProtKB"/>
</dbReference>
<dbReference type="CDD" id="cd13970">
    <property type="entry name" value="ABC1_ADCK3"/>
    <property type="match status" value="1"/>
</dbReference>
<dbReference type="InterPro" id="IPR004147">
    <property type="entry name" value="ABC1_dom"/>
</dbReference>
<dbReference type="InterPro" id="IPR034646">
    <property type="entry name" value="ADCK3_dom"/>
</dbReference>
<dbReference type="InterPro" id="IPR051409">
    <property type="entry name" value="Atypical_kinase_ADCK"/>
</dbReference>
<dbReference type="InterPro" id="IPR011009">
    <property type="entry name" value="Kinase-like_dom_sf"/>
</dbReference>
<dbReference type="PANTHER" id="PTHR43851">
    <property type="match status" value="1"/>
</dbReference>
<dbReference type="PANTHER" id="PTHR43851:SF3">
    <property type="entry name" value="COENZYME Q8"/>
    <property type="match status" value="1"/>
</dbReference>
<dbReference type="Pfam" id="PF03109">
    <property type="entry name" value="ABC1"/>
    <property type="match status" value="1"/>
</dbReference>
<dbReference type="SUPFAM" id="SSF56112">
    <property type="entry name" value="Protein kinase-like (PK-like)"/>
    <property type="match status" value="1"/>
</dbReference>
<name>COQ8_YEAST</name>
<accession>P27697</accession>
<accession>D6VU29</accession>
<gene>
    <name type="primary">COQ8</name>
    <name type="synonym">ABC1</name>
    <name type="ordered locus">YGL119W</name>
</gene>